<evidence type="ECO:0000250" key="1"/>
<evidence type="ECO:0000250" key="2">
    <source>
        <dbReference type="UniProtKB" id="Q9VS24"/>
    </source>
</evidence>
<evidence type="ECO:0000255" key="3">
    <source>
        <dbReference type="PROSITE-ProRule" id="PRU00145"/>
    </source>
</evidence>
<evidence type="ECO:0000256" key="4">
    <source>
        <dbReference type="SAM" id="MobiDB-lite"/>
    </source>
</evidence>
<evidence type="ECO:0000269" key="5">
    <source>
    </source>
</evidence>
<evidence type="ECO:0000269" key="6">
    <source>
    </source>
</evidence>
<evidence type="ECO:0000269" key="7">
    <source>
    </source>
</evidence>
<evidence type="ECO:0000303" key="8">
    <source>
    </source>
</evidence>
<evidence type="ECO:0000305" key="9"/>
<comment type="function">
    <text evidence="7">Interacts with TGF-beta receptor type-1 (TGFBR1) and inhibits dissociation of activated SMAD2 from TGFBR1, impeding its nuclear accumulation and resulting in impaired TGF-beta signaling. May also affect FOXO, Hippo and Wnt signaling.</text>
</comment>
<comment type="subunit">
    <text evidence="7">Interacts with TGFBR1.</text>
</comment>
<comment type="interaction">
    <interactant intactId="EBI-1043669">
        <id>Q14D04</id>
    </interactant>
    <interactant intactId="EBI-357345">
        <id>Q14160</id>
        <label>SCRIB</label>
    </interactant>
    <organismsDiffer>false</organismsDiffer>
    <experiments>2</experiments>
</comment>
<comment type="subcellular location">
    <subcellularLocation>
        <location evidence="7">Cell membrane</location>
        <topology evidence="2">Peripheral membrane protein</topology>
        <orientation evidence="2">Cytoplasmic side</orientation>
    </subcellularLocation>
</comment>
<comment type="alternative products">
    <event type="alternative splicing"/>
    <isoform>
        <id>Q14D04-1</id>
        <name>1</name>
        <sequence type="displayed"/>
    </isoform>
    <isoform>
        <id>Q14D04-2</id>
        <name>2</name>
        <sequence type="described" ref="VSP_027433"/>
    </isoform>
    <isoform>
        <id>Q14D04-3</id>
        <name>3</name>
        <sequence type="described" ref="VSP_027431 VSP_027432"/>
    </isoform>
    <isoform>
        <id>Q14D04-4</id>
        <name>4</name>
        <sequence type="described" ref="VSP_047655 VSP_047656"/>
    </isoform>
</comment>
<comment type="domain">
    <text evidence="1">The PH domain is required for membrane targeting.</text>
</comment>
<comment type="similarity">
    <text evidence="9">Belongs to the MELT/VEPH family.</text>
</comment>
<comment type="sequence caution" evidence="9">
    <conflict type="erroneous initiation">
        <sequence resource="EMBL-CDS" id="BAB14165"/>
    </conflict>
</comment>
<comment type="sequence caution" evidence="9">
    <conflict type="erroneous initiation">
        <sequence resource="EMBL-CDS" id="BAB21783"/>
    </conflict>
</comment>
<sequence length="833" mass="94745">MHQLFRLVLGQKDLSRAGDLFSLDDSEIEDSLTEALEQIKIISSSSDYQTNNNDQAVVEICITRITTAIRETESIEKHAKALVGLWDSCLEHNLRPFGKDEDTPHAKIASDIMSCILQNYNRPPVMALAIPIAVKFLHRGNKELCRNMSNYLSLAAITKADLLADHTEVIVKSILQGNTMLLRVLPAVYEKQPQPINRHLTELLALMSQLEQPEQYHLLRLLHVAAKKKQLEVVQKCIPFLIGHLKDSTHNDIILNILIEIAVYEPVALNSFLPMLKEIGERFPYLTGQMARIYGAVGHVDEERARSCLTYLVSQLANMEHSFHHILLLEIKSITDTFSSILGPQSRDIFRMSNSFTAIAKLLTRQLENTKAGSGRRKISTEIEFPEKLEETKLIVTENEDHEKLQVKIQAFEDKINAGSNTPGSIRRYSLGQVSKEERKNIRFNRSKSLAFHTMLTKGVGSDDGEDENRGDIPASISLSEIDPLGQGNDKLPFKTDTERSQLGESSVSYPNIIHIDSENLSETVKENSQEETPETTASPIEYQDKLYLHLKKNLSKVKAYAMEIGKKIPVPDQCTIEDTVRSCVAKLFFTCSLKGHYCLYSKSSFILISQEPQPWIQIMFLFQQSLFPEPLSIQSHSVQFLRALWEKTQAGGAHSFETAMMESTFPQQKDLDQVQLHLEEVRFFDVFGFSETAGAWQCFMCNNPEKATVVNQDGQPLIEGKLKEKQVRWKFIKRWKTRYFTLAGNQLLFQKGKSKDDPDDCPIELSKVQSVKAVAKKRRDRSLPRAFEIFTDNKTYVFKAKDEKNAEEWLQCINVAVAQAKERESREVTTYL</sequence>
<proteinExistence type="evidence at protein level"/>
<keyword id="KW-0025">Alternative splicing</keyword>
<keyword id="KW-1003">Cell membrane</keyword>
<keyword id="KW-0472">Membrane</keyword>
<keyword id="KW-1267">Proteomics identification</keyword>
<keyword id="KW-1185">Reference proteome</keyword>
<organism>
    <name type="scientific">Homo sapiens</name>
    <name type="common">Human</name>
    <dbReference type="NCBI Taxonomy" id="9606"/>
    <lineage>
        <taxon>Eukaryota</taxon>
        <taxon>Metazoa</taxon>
        <taxon>Chordata</taxon>
        <taxon>Craniata</taxon>
        <taxon>Vertebrata</taxon>
        <taxon>Euteleostomi</taxon>
        <taxon>Mammalia</taxon>
        <taxon>Eutheria</taxon>
        <taxon>Euarchontoglires</taxon>
        <taxon>Primates</taxon>
        <taxon>Haplorrhini</taxon>
        <taxon>Catarrhini</taxon>
        <taxon>Hominidae</taxon>
        <taxon>Homo</taxon>
    </lineage>
</organism>
<gene>
    <name type="primary">VEPH1</name>
    <name type="synonym">KIAA1692</name>
    <name type="synonym">VEPH</name>
</gene>
<reference key="1">
    <citation type="journal article" date="2000" name="DNA Res.">
        <title>Prediction of the coding sequences of unidentified human genes. XIX. The complete sequences of 100 new cDNA clones from brain which code for large proteins in vitro.</title>
        <authorList>
            <person name="Nagase T."/>
            <person name="Kikuno R."/>
            <person name="Hattori A."/>
            <person name="Kondo Y."/>
            <person name="Okumura K."/>
            <person name="Ohara O."/>
        </authorList>
    </citation>
    <scope>NUCLEOTIDE SEQUENCE [LARGE SCALE MRNA] (ISOFORM 1)</scope>
    <source>
        <tissue>Brain</tissue>
    </source>
</reference>
<reference key="2">
    <citation type="journal article" date="2004" name="Nat. Genet.">
        <title>Complete sequencing and characterization of 21,243 full-length human cDNAs.</title>
        <authorList>
            <person name="Ota T."/>
            <person name="Suzuki Y."/>
            <person name="Nishikawa T."/>
            <person name="Otsuki T."/>
            <person name="Sugiyama T."/>
            <person name="Irie R."/>
            <person name="Wakamatsu A."/>
            <person name="Hayashi K."/>
            <person name="Sato H."/>
            <person name="Nagai K."/>
            <person name="Kimura K."/>
            <person name="Makita H."/>
            <person name="Sekine M."/>
            <person name="Obayashi M."/>
            <person name="Nishi T."/>
            <person name="Shibahara T."/>
            <person name="Tanaka T."/>
            <person name="Ishii S."/>
            <person name="Yamamoto J."/>
            <person name="Saito K."/>
            <person name="Kawai Y."/>
            <person name="Isono Y."/>
            <person name="Nakamura Y."/>
            <person name="Nagahari K."/>
            <person name="Murakami K."/>
            <person name="Yasuda T."/>
            <person name="Iwayanagi T."/>
            <person name="Wagatsuma M."/>
            <person name="Shiratori A."/>
            <person name="Sudo H."/>
            <person name="Hosoiri T."/>
            <person name="Kaku Y."/>
            <person name="Kodaira H."/>
            <person name="Kondo H."/>
            <person name="Sugawara M."/>
            <person name="Takahashi M."/>
            <person name="Kanda K."/>
            <person name="Yokoi T."/>
            <person name="Furuya T."/>
            <person name="Kikkawa E."/>
            <person name="Omura Y."/>
            <person name="Abe K."/>
            <person name="Kamihara K."/>
            <person name="Katsuta N."/>
            <person name="Sato K."/>
            <person name="Tanikawa M."/>
            <person name="Yamazaki M."/>
            <person name="Ninomiya K."/>
            <person name="Ishibashi T."/>
            <person name="Yamashita H."/>
            <person name="Murakawa K."/>
            <person name="Fujimori K."/>
            <person name="Tanai H."/>
            <person name="Kimata M."/>
            <person name="Watanabe M."/>
            <person name="Hiraoka S."/>
            <person name="Chiba Y."/>
            <person name="Ishida S."/>
            <person name="Ono Y."/>
            <person name="Takiguchi S."/>
            <person name="Watanabe S."/>
            <person name="Yosida M."/>
            <person name="Hotuta T."/>
            <person name="Kusano J."/>
            <person name="Kanehori K."/>
            <person name="Takahashi-Fujii A."/>
            <person name="Hara H."/>
            <person name="Tanase T.-O."/>
            <person name="Nomura Y."/>
            <person name="Togiya S."/>
            <person name="Komai F."/>
            <person name="Hara R."/>
            <person name="Takeuchi K."/>
            <person name="Arita M."/>
            <person name="Imose N."/>
            <person name="Musashino K."/>
            <person name="Yuuki H."/>
            <person name="Oshima A."/>
            <person name="Sasaki N."/>
            <person name="Aotsuka S."/>
            <person name="Yoshikawa Y."/>
            <person name="Matsunawa H."/>
            <person name="Ichihara T."/>
            <person name="Shiohata N."/>
            <person name="Sano S."/>
            <person name="Moriya S."/>
            <person name="Momiyama H."/>
            <person name="Satoh N."/>
            <person name="Takami S."/>
            <person name="Terashima Y."/>
            <person name="Suzuki O."/>
            <person name="Nakagawa S."/>
            <person name="Senoh A."/>
            <person name="Mizoguchi H."/>
            <person name="Goto Y."/>
            <person name="Shimizu F."/>
            <person name="Wakebe H."/>
            <person name="Hishigaki H."/>
            <person name="Watanabe T."/>
            <person name="Sugiyama A."/>
            <person name="Takemoto M."/>
            <person name="Kawakami B."/>
            <person name="Yamazaki M."/>
            <person name="Watanabe K."/>
            <person name="Kumagai A."/>
            <person name="Itakura S."/>
            <person name="Fukuzumi Y."/>
            <person name="Fujimori Y."/>
            <person name="Komiyama M."/>
            <person name="Tashiro H."/>
            <person name="Tanigami A."/>
            <person name="Fujiwara T."/>
            <person name="Ono T."/>
            <person name="Yamada K."/>
            <person name="Fujii Y."/>
            <person name="Ozaki K."/>
            <person name="Hirao M."/>
            <person name="Ohmori Y."/>
            <person name="Kawabata A."/>
            <person name="Hikiji T."/>
            <person name="Kobatake N."/>
            <person name="Inagaki H."/>
            <person name="Ikema Y."/>
            <person name="Okamoto S."/>
            <person name="Okitani R."/>
            <person name="Kawakami T."/>
            <person name="Noguchi S."/>
            <person name="Itoh T."/>
            <person name="Shigeta K."/>
            <person name="Senba T."/>
            <person name="Matsumura K."/>
            <person name="Nakajima Y."/>
            <person name="Mizuno T."/>
            <person name="Morinaga M."/>
            <person name="Sasaki M."/>
            <person name="Togashi T."/>
            <person name="Oyama M."/>
            <person name="Hata H."/>
            <person name="Watanabe M."/>
            <person name="Komatsu T."/>
            <person name="Mizushima-Sugano J."/>
            <person name="Satoh T."/>
            <person name="Shirai Y."/>
            <person name="Takahashi Y."/>
            <person name="Nakagawa K."/>
            <person name="Okumura K."/>
            <person name="Nagase T."/>
            <person name="Nomura N."/>
            <person name="Kikuchi H."/>
            <person name="Masuho Y."/>
            <person name="Yamashita R."/>
            <person name="Nakai K."/>
            <person name="Yada T."/>
            <person name="Nakamura Y."/>
            <person name="Ohara O."/>
            <person name="Isogai T."/>
            <person name="Sugano S."/>
        </authorList>
    </citation>
    <scope>NUCLEOTIDE SEQUENCE [LARGE SCALE MRNA] (ISOFORM 1)</scope>
</reference>
<reference key="3">
    <citation type="journal article" date="2007" name="BMC Genomics">
        <title>The full-ORF clone resource of the German cDNA consortium.</title>
        <authorList>
            <person name="Bechtel S."/>
            <person name="Rosenfelder H."/>
            <person name="Duda A."/>
            <person name="Schmidt C.P."/>
            <person name="Ernst U."/>
            <person name="Wellenreuther R."/>
            <person name="Mehrle A."/>
            <person name="Schuster C."/>
            <person name="Bahr A."/>
            <person name="Bloecker H."/>
            <person name="Heubner D."/>
            <person name="Hoerlein A."/>
            <person name="Michel G."/>
            <person name="Wedler H."/>
            <person name="Koehrer K."/>
            <person name="Ottenwaelder B."/>
            <person name="Poustka A."/>
            <person name="Wiemann S."/>
            <person name="Schupp I."/>
        </authorList>
    </citation>
    <scope>NUCLEOTIDE SEQUENCE [LARGE SCALE MRNA] (ISOFORM 1)</scope>
    <scope>VARIANT GLY-263</scope>
    <source>
        <tissue>Brain</tissue>
    </source>
</reference>
<reference key="4">
    <citation type="journal article" date="2006" name="Nature">
        <title>The DNA sequence, annotation and analysis of human chromosome 3.</title>
        <authorList>
            <person name="Muzny D.M."/>
            <person name="Scherer S.E."/>
            <person name="Kaul R."/>
            <person name="Wang J."/>
            <person name="Yu J."/>
            <person name="Sudbrak R."/>
            <person name="Buhay C.J."/>
            <person name="Chen R."/>
            <person name="Cree A."/>
            <person name="Ding Y."/>
            <person name="Dugan-Rocha S."/>
            <person name="Gill R."/>
            <person name="Gunaratne P."/>
            <person name="Harris R.A."/>
            <person name="Hawes A.C."/>
            <person name="Hernandez J."/>
            <person name="Hodgson A.V."/>
            <person name="Hume J."/>
            <person name="Jackson A."/>
            <person name="Khan Z.M."/>
            <person name="Kovar-Smith C."/>
            <person name="Lewis L.R."/>
            <person name="Lozado R.J."/>
            <person name="Metzker M.L."/>
            <person name="Milosavljevic A."/>
            <person name="Miner G.R."/>
            <person name="Morgan M.B."/>
            <person name="Nazareth L.V."/>
            <person name="Scott G."/>
            <person name="Sodergren E."/>
            <person name="Song X.-Z."/>
            <person name="Steffen D."/>
            <person name="Wei S."/>
            <person name="Wheeler D.A."/>
            <person name="Wright M.W."/>
            <person name="Worley K.C."/>
            <person name="Yuan Y."/>
            <person name="Zhang Z."/>
            <person name="Adams C.Q."/>
            <person name="Ansari-Lari M.A."/>
            <person name="Ayele M."/>
            <person name="Brown M.J."/>
            <person name="Chen G."/>
            <person name="Chen Z."/>
            <person name="Clendenning J."/>
            <person name="Clerc-Blankenburg K.P."/>
            <person name="Chen R."/>
            <person name="Chen Z."/>
            <person name="Davis C."/>
            <person name="Delgado O."/>
            <person name="Dinh H.H."/>
            <person name="Dong W."/>
            <person name="Draper H."/>
            <person name="Ernst S."/>
            <person name="Fu G."/>
            <person name="Gonzalez-Garay M.L."/>
            <person name="Garcia D.K."/>
            <person name="Gillett W."/>
            <person name="Gu J."/>
            <person name="Hao B."/>
            <person name="Haugen E."/>
            <person name="Havlak P."/>
            <person name="He X."/>
            <person name="Hennig S."/>
            <person name="Hu S."/>
            <person name="Huang W."/>
            <person name="Jackson L.R."/>
            <person name="Jacob L.S."/>
            <person name="Kelly S.H."/>
            <person name="Kube M."/>
            <person name="Levy R."/>
            <person name="Li Z."/>
            <person name="Liu B."/>
            <person name="Liu J."/>
            <person name="Liu W."/>
            <person name="Lu J."/>
            <person name="Maheshwari M."/>
            <person name="Nguyen B.-V."/>
            <person name="Okwuonu G.O."/>
            <person name="Palmeiri A."/>
            <person name="Pasternak S."/>
            <person name="Perez L.M."/>
            <person name="Phelps K.A."/>
            <person name="Plopper F.J."/>
            <person name="Qiang B."/>
            <person name="Raymond C."/>
            <person name="Rodriguez R."/>
            <person name="Saenphimmachak C."/>
            <person name="Santibanez J."/>
            <person name="Shen H."/>
            <person name="Shen Y."/>
            <person name="Subramanian S."/>
            <person name="Tabor P.E."/>
            <person name="Verduzco D."/>
            <person name="Waldron L."/>
            <person name="Wang J."/>
            <person name="Wang J."/>
            <person name="Wang Q."/>
            <person name="Williams G.A."/>
            <person name="Wong G.K.-S."/>
            <person name="Yao Z."/>
            <person name="Zhang J."/>
            <person name="Zhang X."/>
            <person name="Zhao G."/>
            <person name="Zhou J."/>
            <person name="Zhou Y."/>
            <person name="Nelson D."/>
            <person name="Lehrach H."/>
            <person name="Reinhardt R."/>
            <person name="Naylor S.L."/>
            <person name="Yang H."/>
            <person name="Olson M."/>
            <person name="Weinstock G."/>
            <person name="Gibbs R.A."/>
        </authorList>
    </citation>
    <scope>NUCLEOTIDE SEQUENCE [LARGE SCALE GENOMIC DNA]</scope>
</reference>
<reference key="5">
    <citation type="submission" date="2005-09" db="EMBL/GenBank/DDBJ databases">
        <authorList>
            <person name="Mural R.J."/>
            <person name="Istrail S."/>
            <person name="Sutton G.G."/>
            <person name="Florea L."/>
            <person name="Halpern A.L."/>
            <person name="Mobarry C.M."/>
            <person name="Lippert R."/>
            <person name="Walenz B."/>
            <person name="Shatkay H."/>
            <person name="Dew I."/>
            <person name="Miller J.R."/>
            <person name="Flanigan M.J."/>
            <person name="Edwards N.J."/>
            <person name="Bolanos R."/>
            <person name="Fasulo D."/>
            <person name="Halldorsson B.V."/>
            <person name="Hannenhalli S."/>
            <person name="Turner R."/>
            <person name="Yooseph S."/>
            <person name="Lu F."/>
            <person name="Nusskern D.R."/>
            <person name="Shue B.C."/>
            <person name="Zheng X.H."/>
            <person name="Zhong F."/>
            <person name="Delcher A.L."/>
            <person name="Huson D.H."/>
            <person name="Kravitz S.A."/>
            <person name="Mouchard L."/>
            <person name="Reinert K."/>
            <person name="Remington K.A."/>
            <person name="Clark A.G."/>
            <person name="Waterman M.S."/>
            <person name="Eichler E.E."/>
            <person name="Adams M.D."/>
            <person name="Hunkapiller M.W."/>
            <person name="Myers E.W."/>
            <person name="Venter J.C."/>
        </authorList>
    </citation>
    <scope>NUCLEOTIDE SEQUENCE [LARGE SCALE GENOMIC DNA]</scope>
</reference>
<reference key="6">
    <citation type="journal article" date="2004" name="Genome Res.">
        <title>The status, quality, and expansion of the NIH full-length cDNA project: the Mammalian Gene Collection (MGC).</title>
        <authorList>
            <consortium name="The MGC Project Team"/>
        </authorList>
    </citation>
    <scope>NUCLEOTIDE SEQUENCE [LARGE SCALE MRNA] (ISOFORMS 1 AND 2)</scope>
    <scope>VARIANT PRO-522</scope>
    <source>
        <tissue>Brain</tissue>
        <tissue>Kidney</tissue>
        <tissue>Skin</tissue>
    </source>
</reference>
<reference key="7">
    <citation type="journal article" date="2004" name="Biochimie">
        <title>Identification and characterization of Veph, a novel gene encoding a PH domain-containing protein expressed in the developing central nervous system of vertebrates.</title>
        <authorList>
            <person name="Muto E."/>
            <person name="Tabata Y."/>
            <person name="Taneda T."/>
            <person name="Aoki Y."/>
            <person name="Muto A."/>
            <person name="Arai K."/>
            <person name="Watanabe S."/>
        </authorList>
    </citation>
    <scope>IDENTIFICATION</scope>
</reference>
<reference key="8">
    <citation type="journal article" date="2005" name="Dev. Cell">
        <title>Drosophila Melted modulates FOXO and TOR activity.</title>
        <authorList>
            <person name="Teleman A.A."/>
            <person name="Chen Y.-W."/>
            <person name="Cohen S.M."/>
        </authorList>
    </citation>
    <scope>IDENTIFICATION</scope>
</reference>
<reference key="9">
    <citation type="journal article" date="2015" name="Proc. Natl. Acad. Sci. U.S.A.">
        <title>Human ortholog of Drosophila Melted impedes SMAD2 release from TGF-beta receptor I to inhibit TGF-beta signaling.</title>
        <authorList>
            <person name="Shathasivam P."/>
            <person name="Kollara A."/>
            <person name="Ringuette M.J."/>
            <person name="Virtanen C."/>
            <person name="Wrana J.L."/>
            <person name="Brown T.J."/>
        </authorList>
    </citation>
    <scope>FUNCTION</scope>
    <scope>INTERACTION WITH TGFBR1</scope>
    <scope>SUBCELLULAR LOCATION</scope>
</reference>
<name>MELT_HUMAN</name>
<accession>Q14D04</accession>
<accession>D3DNL0</accession>
<accession>F5GZ91</accession>
<accession>Q2TAA9</accession>
<accession>Q3MIX2</accession>
<accession>Q6PEL3</accession>
<accession>Q86TL5</accession>
<accession>Q8TCR3</accession>
<accession>Q96SP7</accession>
<accession>Q9C0H1</accession>
<accession>Q9H9Q7</accession>
<feature type="chain" id="PRO_0000297955" description="Ventricular zone-expressed PH domain-containing protein homolog 1">
    <location>
        <begin position="1"/>
        <end position="833"/>
    </location>
</feature>
<feature type="domain" description="PH" evidence="3">
    <location>
        <begin position="716"/>
        <end position="819"/>
    </location>
</feature>
<feature type="region of interest" description="Interaction with TGFBR1" evidence="7">
    <location>
        <begin position="201"/>
        <end position="319"/>
    </location>
</feature>
<feature type="region of interest" description="Disordered" evidence="4">
    <location>
        <begin position="458"/>
        <end position="505"/>
    </location>
</feature>
<feature type="region of interest" description="Interaction with TGFBR1" evidence="7">
    <location>
        <begin position="663"/>
        <end position="833"/>
    </location>
</feature>
<feature type="compositionally biased region" description="Basic and acidic residues" evidence="4">
    <location>
        <begin position="492"/>
        <end position="502"/>
    </location>
</feature>
<feature type="splice variant" id="VSP_047655" description="In isoform 4." evidence="9">
    <original>G</original>
    <variation>V</variation>
    <location>
        <position position="177"/>
    </location>
</feature>
<feature type="splice variant" id="VSP_047656" description="In isoform 4." evidence="9">
    <location>
        <begin position="178"/>
        <end position="833"/>
    </location>
</feature>
<feature type="splice variant" id="VSP_027431" description="In isoform 3." evidence="9">
    <original>NTMLLRVLPAVYEKQPQPINRHLTELLALMSQLEQP</original>
    <variation>MVRKLSLGTCFGRYLKVFSSSIYGLWEARPRVLEAN</variation>
    <location>
        <begin position="178"/>
        <end position="213"/>
    </location>
</feature>
<feature type="splice variant" id="VSP_027432" description="In isoform 3." evidence="9">
    <location>
        <begin position="214"/>
        <end position="833"/>
    </location>
</feature>
<feature type="splice variant" id="VSP_027433" description="In isoform 2." evidence="8">
    <location>
        <begin position="626"/>
        <end position="670"/>
    </location>
</feature>
<feature type="sequence variant" id="VAR_034692" description="In dbSNP:rs34559487.">
    <original>S</original>
    <variation>C</variation>
    <location>
        <position position="208"/>
    </location>
</feature>
<feature type="sequence variant" id="VAR_034693" description="In dbSNP:rs1378796." evidence="6">
    <original>V</original>
    <variation>G</variation>
    <location>
        <position position="263"/>
    </location>
</feature>
<feature type="sequence variant" id="VAR_034694" description="In dbSNP:rs1378795.">
    <original>S</original>
    <variation>C</variation>
    <location>
        <position position="271"/>
    </location>
</feature>
<feature type="sequence variant" id="VAR_034695" description="In dbSNP:rs11923380.">
    <original>M</original>
    <variation>V</variation>
    <location>
        <position position="319"/>
    </location>
</feature>
<feature type="sequence variant" id="VAR_034696" description="In dbSNP:rs34823544.">
    <original>L</original>
    <variation>V</variation>
    <location>
        <position position="329"/>
    </location>
</feature>
<feature type="sequence variant" id="VAR_034697" description="In dbSNP:rs16827563.">
    <original>R</original>
    <variation>Q</variation>
    <location>
        <position position="365"/>
    </location>
</feature>
<feature type="sequence variant" id="VAR_061683" description="In dbSNP:rs59504298.">
    <original>S</original>
    <variation>L</variation>
    <location>
        <position position="501"/>
    </location>
</feature>
<feature type="sequence variant" id="VAR_034698" description="In dbSNP:rs11918974." evidence="5">
    <original>S</original>
    <variation>P</variation>
    <location>
        <position position="522"/>
    </location>
</feature>
<feature type="sequence conflict" description="In Ref. 2; BAB55243." evidence="9" ref="2">
    <original>I</original>
    <variation>M</variation>
    <location>
        <position position="259"/>
    </location>
</feature>
<feature type="sequence conflict" description="In Ref. 2; BAB55243." evidence="9" ref="2">
    <original>E</original>
    <variation>A</variation>
    <location>
        <position position="808"/>
    </location>
</feature>
<dbReference type="EMBL" id="AB051479">
    <property type="protein sequence ID" value="BAB21783.1"/>
    <property type="status" value="ALT_INIT"/>
    <property type="molecule type" value="mRNA"/>
</dbReference>
<dbReference type="EMBL" id="AK022666">
    <property type="protein sequence ID" value="BAB14165.1"/>
    <property type="status" value="ALT_INIT"/>
    <property type="molecule type" value="mRNA"/>
</dbReference>
<dbReference type="EMBL" id="AK027625">
    <property type="protein sequence ID" value="BAB55243.1"/>
    <property type="molecule type" value="mRNA"/>
</dbReference>
<dbReference type="EMBL" id="AL713656">
    <property type="protein sequence ID" value="CAD28465.2"/>
    <property type="molecule type" value="mRNA"/>
</dbReference>
<dbReference type="EMBL" id="AC020630">
    <property type="status" value="NOT_ANNOTATED_CDS"/>
    <property type="molecule type" value="Genomic_DNA"/>
</dbReference>
<dbReference type="EMBL" id="AC092944">
    <property type="status" value="NOT_ANNOTATED_CDS"/>
    <property type="molecule type" value="Genomic_DNA"/>
</dbReference>
<dbReference type="EMBL" id="CH471052">
    <property type="protein sequence ID" value="EAW78705.1"/>
    <property type="molecule type" value="Genomic_DNA"/>
</dbReference>
<dbReference type="EMBL" id="CH471052">
    <property type="protein sequence ID" value="EAW78706.1"/>
    <property type="molecule type" value="Genomic_DNA"/>
</dbReference>
<dbReference type="EMBL" id="CH471052">
    <property type="protein sequence ID" value="EAW78707.1"/>
    <property type="molecule type" value="Genomic_DNA"/>
</dbReference>
<dbReference type="EMBL" id="BC042159">
    <property type="protein sequence ID" value="AAH42159.1"/>
    <property type="molecule type" value="mRNA"/>
</dbReference>
<dbReference type="EMBL" id="BC057999">
    <property type="protein sequence ID" value="AAH57999.1"/>
    <property type="molecule type" value="mRNA"/>
</dbReference>
<dbReference type="EMBL" id="BC101660">
    <property type="protein sequence ID" value="AAI01661.1"/>
    <property type="molecule type" value="mRNA"/>
</dbReference>
<dbReference type="EMBL" id="BC111017">
    <property type="protein sequence ID" value="AAI11018.1"/>
    <property type="molecule type" value="mRNA"/>
</dbReference>
<dbReference type="EMBL" id="BC113555">
    <property type="protein sequence ID" value="AAI13556.1"/>
    <property type="molecule type" value="mRNA"/>
</dbReference>
<dbReference type="CCDS" id="CCDS3179.1">
    <molecule id="Q14D04-1"/>
</dbReference>
<dbReference type="CCDS" id="CCDS54661.1">
    <molecule id="Q14D04-3"/>
</dbReference>
<dbReference type="CCDS" id="CCDS54662.1">
    <molecule id="Q14D04-2"/>
</dbReference>
<dbReference type="CCDS" id="CCDS54663.1">
    <molecule id="Q14D04-4"/>
</dbReference>
<dbReference type="RefSeq" id="NP_001161383.1">
    <molecule id="Q14D04-2"/>
    <property type="nucleotide sequence ID" value="NM_001167911.2"/>
</dbReference>
<dbReference type="RefSeq" id="NP_001161384.1">
    <molecule id="Q14D04-1"/>
    <property type="nucleotide sequence ID" value="NM_001167912.2"/>
</dbReference>
<dbReference type="RefSeq" id="NP_001161387.1">
    <molecule id="Q14D04-3"/>
    <property type="nucleotide sequence ID" value="NM_001167915.3"/>
</dbReference>
<dbReference type="RefSeq" id="NP_001161388.1">
    <molecule id="Q14D04-3"/>
    <property type="nucleotide sequence ID" value="NM_001167916.3"/>
</dbReference>
<dbReference type="RefSeq" id="NP_001161389.1">
    <molecule id="Q14D04-4"/>
    <property type="nucleotide sequence ID" value="NM_001167917.1"/>
</dbReference>
<dbReference type="RefSeq" id="NP_078897.2">
    <molecule id="Q14D04-1"/>
    <property type="nucleotide sequence ID" value="NM_024621.2"/>
</dbReference>
<dbReference type="RefSeq" id="XP_024309514.1">
    <molecule id="Q14D04-1"/>
    <property type="nucleotide sequence ID" value="XM_024453746.2"/>
</dbReference>
<dbReference type="RefSeq" id="XP_024309515.1">
    <molecule id="Q14D04-1"/>
    <property type="nucleotide sequence ID" value="XM_024453747.2"/>
</dbReference>
<dbReference type="RefSeq" id="XP_024309516.1">
    <molecule id="Q14D04-1"/>
    <property type="nucleotide sequence ID" value="XM_024453748.2"/>
</dbReference>
<dbReference type="RefSeq" id="XP_024309517.1">
    <molecule id="Q14D04-4"/>
    <property type="nucleotide sequence ID" value="XM_024453749.2"/>
</dbReference>
<dbReference type="RefSeq" id="XP_024309518.1">
    <molecule id="Q14D04-4"/>
    <property type="nucleotide sequence ID" value="XM_024453750.2"/>
</dbReference>
<dbReference type="RefSeq" id="XP_047304877.1">
    <molecule id="Q14D04-2"/>
    <property type="nucleotide sequence ID" value="XM_047448921.1"/>
</dbReference>
<dbReference type="RefSeq" id="XP_047304878.1">
    <molecule id="Q14D04-2"/>
    <property type="nucleotide sequence ID" value="XM_047448922.1"/>
</dbReference>
<dbReference type="RefSeq" id="XP_047304887.1">
    <molecule id="Q14D04-4"/>
    <property type="nucleotide sequence ID" value="XM_047448931.1"/>
</dbReference>
<dbReference type="RefSeq" id="XP_054203840.1">
    <molecule id="Q14D04-1"/>
    <property type="nucleotide sequence ID" value="XM_054347865.1"/>
</dbReference>
<dbReference type="RefSeq" id="XP_054203841.1">
    <molecule id="Q14D04-1"/>
    <property type="nucleotide sequence ID" value="XM_054347866.1"/>
</dbReference>
<dbReference type="RefSeq" id="XP_054203842.1">
    <molecule id="Q14D04-1"/>
    <property type="nucleotide sequence ID" value="XM_054347867.1"/>
</dbReference>
<dbReference type="RefSeq" id="XP_054203843.1">
    <molecule id="Q14D04-2"/>
    <property type="nucleotide sequence ID" value="XM_054347868.1"/>
</dbReference>
<dbReference type="RefSeq" id="XP_054203845.1">
    <molecule id="Q14D04-2"/>
    <property type="nucleotide sequence ID" value="XM_054347870.1"/>
</dbReference>
<dbReference type="RefSeq" id="XP_054203854.1">
    <molecule id="Q14D04-4"/>
    <property type="nucleotide sequence ID" value="XM_054347879.1"/>
</dbReference>
<dbReference type="RefSeq" id="XP_054203855.1">
    <molecule id="Q14D04-4"/>
    <property type="nucleotide sequence ID" value="XM_054347880.1"/>
</dbReference>
<dbReference type="RefSeq" id="XP_054203856.1">
    <molecule id="Q14D04-4"/>
    <property type="nucleotide sequence ID" value="XM_054347881.1"/>
</dbReference>
<dbReference type="BioGRID" id="122799">
    <property type="interactions" value="7"/>
</dbReference>
<dbReference type="FunCoup" id="Q14D04">
    <property type="interactions" value="693"/>
</dbReference>
<dbReference type="IntAct" id="Q14D04">
    <property type="interactions" value="9"/>
</dbReference>
<dbReference type="MINT" id="Q14D04"/>
<dbReference type="STRING" id="9606.ENSP00000354919"/>
<dbReference type="GlyGen" id="Q14D04">
    <property type="glycosylation" value="1 site, 1 O-linked glycan (1 site)"/>
</dbReference>
<dbReference type="iPTMnet" id="Q14D04"/>
<dbReference type="PhosphoSitePlus" id="Q14D04"/>
<dbReference type="BioMuta" id="VEPH1"/>
<dbReference type="DMDM" id="121946695"/>
<dbReference type="jPOST" id="Q14D04"/>
<dbReference type="MassIVE" id="Q14D04"/>
<dbReference type="PaxDb" id="9606-ENSP00000354919"/>
<dbReference type="PeptideAtlas" id="Q14D04"/>
<dbReference type="ProteomicsDB" id="24965"/>
<dbReference type="ProteomicsDB" id="60341">
    <molecule id="Q14D04-1"/>
</dbReference>
<dbReference type="ProteomicsDB" id="60342">
    <molecule id="Q14D04-2"/>
</dbReference>
<dbReference type="ProteomicsDB" id="60343">
    <molecule id="Q14D04-3"/>
</dbReference>
<dbReference type="TopDownProteomics" id="Q14D04-2">
    <molecule id="Q14D04-2"/>
</dbReference>
<dbReference type="Antibodypedia" id="18417">
    <property type="antibodies" value="48 antibodies from 16 providers"/>
</dbReference>
<dbReference type="DNASU" id="79674"/>
<dbReference type="Ensembl" id="ENST00000362010.7">
    <molecule id="Q14D04-1"/>
    <property type="protein sequence ID" value="ENSP00000354919.2"/>
    <property type="gene ID" value="ENSG00000197415.12"/>
</dbReference>
<dbReference type="Ensembl" id="ENST00000392832.6">
    <molecule id="Q14D04-1"/>
    <property type="protein sequence ID" value="ENSP00000376577.2"/>
    <property type="gene ID" value="ENSG00000197415.12"/>
</dbReference>
<dbReference type="Ensembl" id="ENST00000392833.6">
    <molecule id="Q14D04-2"/>
    <property type="protein sequence ID" value="ENSP00000376578.2"/>
    <property type="gene ID" value="ENSG00000197415.12"/>
</dbReference>
<dbReference type="Ensembl" id="ENST00000468233.5">
    <molecule id="Q14D04-3"/>
    <property type="protein sequence ID" value="ENSP00000417268.1"/>
    <property type="gene ID" value="ENSG00000197415.12"/>
</dbReference>
<dbReference type="Ensembl" id="ENST00000494677.5">
    <molecule id="Q14D04-3"/>
    <property type="protein sequence ID" value="ENSP00000419193.1"/>
    <property type="gene ID" value="ENSG00000197415.12"/>
</dbReference>
<dbReference type="Ensembl" id="ENST00000537559.5">
    <molecule id="Q14D04-4"/>
    <property type="protein sequence ID" value="ENSP00000443868.1"/>
    <property type="gene ID" value="ENSG00000197415.12"/>
</dbReference>
<dbReference type="GeneID" id="79674"/>
<dbReference type="KEGG" id="hsa:79674"/>
<dbReference type="MANE-Select" id="ENST00000362010.7">
    <property type="protein sequence ID" value="ENSP00000354919.2"/>
    <property type="RefSeq nucleotide sequence ID" value="NM_001167912.2"/>
    <property type="RefSeq protein sequence ID" value="NP_001161384.1"/>
</dbReference>
<dbReference type="UCSC" id="uc003fbj.3">
    <molecule id="Q14D04-1"/>
    <property type="organism name" value="human"/>
</dbReference>
<dbReference type="AGR" id="HGNC:25735"/>
<dbReference type="CTD" id="79674"/>
<dbReference type="DisGeNET" id="79674"/>
<dbReference type="GeneCards" id="VEPH1"/>
<dbReference type="HGNC" id="HGNC:25735">
    <property type="gene designation" value="VEPH1"/>
</dbReference>
<dbReference type="HPA" id="ENSG00000197415">
    <property type="expression patterns" value="Tissue enhanced (adrenal gland, kidney, lung)"/>
</dbReference>
<dbReference type="MIM" id="609594">
    <property type="type" value="gene"/>
</dbReference>
<dbReference type="neXtProt" id="NX_Q14D04"/>
<dbReference type="OpenTargets" id="ENSG00000197415"/>
<dbReference type="PharmGKB" id="PA134952229"/>
<dbReference type="VEuPathDB" id="HostDB:ENSG00000197415"/>
<dbReference type="eggNOG" id="KOG3723">
    <property type="taxonomic scope" value="Eukaryota"/>
</dbReference>
<dbReference type="GeneTree" id="ENSGT00390000018660"/>
<dbReference type="HOGENOM" id="CLU_010394_0_0_1"/>
<dbReference type="InParanoid" id="Q14D04"/>
<dbReference type="OMA" id="WIRIMLL"/>
<dbReference type="OrthoDB" id="5869902at2759"/>
<dbReference type="PAN-GO" id="Q14D04">
    <property type="GO annotations" value="3 GO annotations based on evolutionary models"/>
</dbReference>
<dbReference type="PhylomeDB" id="Q14D04"/>
<dbReference type="TreeFam" id="TF314736"/>
<dbReference type="PathwayCommons" id="Q14D04"/>
<dbReference type="SignaLink" id="Q14D04"/>
<dbReference type="SIGNOR" id="Q14D04"/>
<dbReference type="BioGRID-ORCS" id="79674">
    <property type="hits" value="11 hits in 1150 CRISPR screens"/>
</dbReference>
<dbReference type="ChiTaRS" id="VEPH1">
    <property type="organism name" value="human"/>
</dbReference>
<dbReference type="GenomeRNAi" id="79674"/>
<dbReference type="Pharos" id="Q14D04">
    <property type="development level" value="Tbio"/>
</dbReference>
<dbReference type="PRO" id="PR:Q14D04"/>
<dbReference type="Proteomes" id="UP000005640">
    <property type="component" value="Chromosome 3"/>
</dbReference>
<dbReference type="RNAct" id="Q14D04">
    <property type="molecule type" value="protein"/>
</dbReference>
<dbReference type="Bgee" id="ENSG00000197415">
    <property type="expression patterns" value="Expressed in pigmented layer of retina and 125 other cell types or tissues"/>
</dbReference>
<dbReference type="ExpressionAtlas" id="Q14D04">
    <property type="expression patterns" value="baseline and differential"/>
</dbReference>
<dbReference type="GO" id="GO:0005886">
    <property type="term" value="C:plasma membrane"/>
    <property type="evidence" value="ECO:0000318"/>
    <property type="project" value="GO_Central"/>
</dbReference>
<dbReference type="GO" id="GO:0010314">
    <property type="term" value="F:phosphatidylinositol-5-phosphate binding"/>
    <property type="evidence" value="ECO:0000318"/>
    <property type="project" value="GO_Central"/>
</dbReference>
<dbReference type="GO" id="GO:0060392">
    <property type="term" value="P:negative regulation of SMAD protein signal transduction"/>
    <property type="evidence" value="ECO:0000314"/>
    <property type="project" value="UniProtKB"/>
</dbReference>
<dbReference type="GO" id="GO:0030512">
    <property type="term" value="P:negative regulation of transforming growth factor beta receptor signaling pathway"/>
    <property type="evidence" value="ECO:0000314"/>
    <property type="project" value="UniProtKB"/>
</dbReference>
<dbReference type="GO" id="GO:0009966">
    <property type="term" value="P:regulation of signal transduction"/>
    <property type="evidence" value="ECO:0000318"/>
    <property type="project" value="GO_Central"/>
</dbReference>
<dbReference type="CDD" id="cd01264">
    <property type="entry name" value="PH_MELT_VEPH1"/>
    <property type="match status" value="1"/>
</dbReference>
<dbReference type="FunFam" id="2.30.29.30:FF:000138">
    <property type="entry name" value="Ventricular zone-expressed PH domain-containing protein-like 1"/>
    <property type="match status" value="1"/>
</dbReference>
<dbReference type="Gene3D" id="2.30.29.30">
    <property type="entry name" value="Pleckstrin-homology domain (PH domain)/Phosphotyrosine-binding domain (PTB)"/>
    <property type="match status" value="1"/>
</dbReference>
<dbReference type="InterPro" id="IPR016024">
    <property type="entry name" value="ARM-type_fold"/>
</dbReference>
<dbReference type="InterPro" id="IPR039888">
    <property type="entry name" value="Melted-like"/>
</dbReference>
<dbReference type="InterPro" id="IPR011993">
    <property type="entry name" value="PH-like_dom_sf"/>
</dbReference>
<dbReference type="InterPro" id="IPR001849">
    <property type="entry name" value="PH_domain"/>
</dbReference>
<dbReference type="PANTHER" id="PTHR21630:SF10">
    <property type="entry name" value="VENTRICULAR ZONE-EXPRESSED PH DOMAIN-CONTAINING PROTEIN HOMOLOG 1"/>
    <property type="match status" value="1"/>
</dbReference>
<dbReference type="PANTHER" id="PTHR21630">
    <property type="entry name" value="VEPH-A/MELTED"/>
    <property type="match status" value="1"/>
</dbReference>
<dbReference type="Pfam" id="PF00169">
    <property type="entry name" value="PH"/>
    <property type="match status" value="1"/>
</dbReference>
<dbReference type="SMART" id="SM00233">
    <property type="entry name" value="PH"/>
    <property type="match status" value="1"/>
</dbReference>
<dbReference type="SUPFAM" id="SSF48371">
    <property type="entry name" value="ARM repeat"/>
    <property type="match status" value="1"/>
</dbReference>
<dbReference type="SUPFAM" id="SSF50729">
    <property type="entry name" value="PH domain-like"/>
    <property type="match status" value="1"/>
</dbReference>
<dbReference type="PROSITE" id="PS50003">
    <property type="entry name" value="PH_DOMAIN"/>
    <property type="match status" value="1"/>
</dbReference>
<protein>
    <recommendedName>
        <fullName>Ventricular zone-expressed PH domain-containing protein homolog 1</fullName>
    </recommendedName>
    <alternativeName>
        <fullName>Protein melted</fullName>
    </alternativeName>
</protein>